<proteinExistence type="evidence at transcript level"/>
<feature type="chain" id="PRO_0000365032" description="Eukaryotic translation initiation factor 3 subunit K">
    <location>
        <begin position="1"/>
        <end position="218"/>
    </location>
</feature>
<feature type="domain" description="PCI" evidence="2">
    <location>
        <begin position="42"/>
        <end position="204"/>
    </location>
</feature>
<reference key="1">
    <citation type="submission" date="2004-06" db="EMBL/GenBank/DDBJ databases">
        <authorList>
            <consortium name="NIH - Xenopus Gene Collection (XGC) project"/>
        </authorList>
    </citation>
    <scope>NUCLEOTIDE SEQUENCE [LARGE SCALE MRNA]</scope>
    <source>
        <tissue>Spleen</tissue>
    </source>
</reference>
<evidence type="ECO:0000255" key="1">
    <source>
        <dbReference type="HAMAP-Rule" id="MF_03010"/>
    </source>
</evidence>
<evidence type="ECO:0000255" key="2">
    <source>
        <dbReference type="PROSITE-ProRule" id="PRU01185"/>
    </source>
</evidence>
<sequence>MASFEQMRANVGKLLRGIDRYNPENLATLERYVETQAKENAYDLEANLAVLKLYQFNPAFFQTTVTAQVLLKALTNLPHTDFTLCKCMIDQAHQEDRPIRQILYLGDLLETCHFQSFWQALDENLDLIDGVTGFEDSVRKFICHVVGITYQHIDRWLLAEMLGDLSEPQLRVWMSKYGWIESENGKIFVCNQEENIKPKNIVEKIDFDSVSGIMASSQ</sequence>
<keyword id="KW-0963">Cytoplasm</keyword>
<keyword id="KW-0396">Initiation factor</keyword>
<keyword id="KW-0539">Nucleus</keyword>
<keyword id="KW-0648">Protein biosynthesis</keyword>
<keyword id="KW-1185">Reference proteome</keyword>
<comment type="function">
    <text evidence="1">Component of the eukaryotic translation initiation factor 3 (eIF-3) complex, which is involved in protein synthesis of a specialized repertoire of mRNAs and, together with other initiation factors, stimulates binding of mRNA and methionyl-tRNAi to the 40S ribosome. The eIF-3 complex specifically targets and initiates translation of a subset of mRNAs involved in cell proliferation.</text>
</comment>
<comment type="subunit">
    <text evidence="1">Component of the eukaryotic translation initiation factor 3 (eIF-3) complex, which is composed of 13 subunits: eif3a, eif3b, eif3c, eif3d, eif3e, eif3f, eif3g, eif3h, eif3i, eif3j, eif3k, eif3l and eif3m.</text>
</comment>
<comment type="subcellular location">
    <subcellularLocation>
        <location evidence="1">Nucleus</location>
    </subcellularLocation>
    <subcellularLocation>
        <location evidence="1">Cytoplasm</location>
    </subcellularLocation>
</comment>
<comment type="similarity">
    <text evidence="1">Belongs to the eIF-3 subunit K family.</text>
</comment>
<dbReference type="EMBL" id="BC073526">
    <property type="protein sequence ID" value="AAH73526.1"/>
    <property type="molecule type" value="mRNA"/>
</dbReference>
<dbReference type="RefSeq" id="NP_001085914.1">
    <property type="nucleotide sequence ID" value="NM_001092445.1"/>
</dbReference>
<dbReference type="SMR" id="Q6GNI4"/>
<dbReference type="BioGRID" id="102504">
    <property type="interactions" value="1"/>
</dbReference>
<dbReference type="IntAct" id="Q6GNI4">
    <property type="interactions" value="1"/>
</dbReference>
<dbReference type="DNASU" id="444341"/>
<dbReference type="GeneID" id="444341"/>
<dbReference type="KEGG" id="xla:444341"/>
<dbReference type="AGR" id="Xenbase:XB-GENE-992848"/>
<dbReference type="CTD" id="444341"/>
<dbReference type="Xenbase" id="XB-GENE-992848">
    <property type="gene designation" value="eif3k.L"/>
</dbReference>
<dbReference type="OrthoDB" id="337745at2759"/>
<dbReference type="Proteomes" id="UP000186698">
    <property type="component" value="Chromosome 8L"/>
</dbReference>
<dbReference type="Bgee" id="444341">
    <property type="expression patterns" value="Expressed in lung and 19 other cell types or tissues"/>
</dbReference>
<dbReference type="GO" id="GO:0016282">
    <property type="term" value="C:eukaryotic 43S preinitiation complex"/>
    <property type="evidence" value="ECO:0007669"/>
    <property type="project" value="UniProtKB-UniRule"/>
</dbReference>
<dbReference type="GO" id="GO:0033290">
    <property type="term" value="C:eukaryotic 48S preinitiation complex"/>
    <property type="evidence" value="ECO:0007669"/>
    <property type="project" value="UniProtKB-UniRule"/>
</dbReference>
<dbReference type="GO" id="GO:0005852">
    <property type="term" value="C:eukaryotic translation initiation factor 3 complex"/>
    <property type="evidence" value="ECO:0000250"/>
    <property type="project" value="UniProtKB"/>
</dbReference>
<dbReference type="GO" id="GO:0005634">
    <property type="term" value="C:nucleus"/>
    <property type="evidence" value="ECO:0007669"/>
    <property type="project" value="UniProtKB-SubCell"/>
</dbReference>
<dbReference type="GO" id="GO:0043022">
    <property type="term" value="F:ribosome binding"/>
    <property type="evidence" value="ECO:0007669"/>
    <property type="project" value="InterPro"/>
</dbReference>
<dbReference type="GO" id="GO:0003723">
    <property type="term" value="F:RNA binding"/>
    <property type="evidence" value="ECO:0007669"/>
    <property type="project" value="UniProtKB-UniRule"/>
</dbReference>
<dbReference type="GO" id="GO:0003743">
    <property type="term" value="F:translation initiation factor activity"/>
    <property type="evidence" value="ECO:0007669"/>
    <property type="project" value="UniProtKB-UniRule"/>
</dbReference>
<dbReference type="GO" id="GO:0001732">
    <property type="term" value="P:formation of cytoplasmic translation initiation complex"/>
    <property type="evidence" value="ECO:0007669"/>
    <property type="project" value="UniProtKB-UniRule"/>
</dbReference>
<dbReference type="GO" id="GO:0006446">
    <property type="term" value="P:regulation of translational initiation"/>
    <property type="evidence" value="ECO:0007669"/>
    <property type="project" value="InterPro"/>
</dbReference>
<dbReference type="GO" id="GO:0006413">
    <property type="term" value="P:translational initiation"/>
    <property type="evidence" value="ECO:0000250"/>
    <property type="project" value="UniProtKB"/>
</dbReference>
<dbReference type="FunFam" id="1.10.10.10:FF:000212">
    <property type="entry name" value="Eukaryotic translation initiation factor 3 subunit K"/>
    <property type="match status" value="1"/>
</dbReference>
<dbReference type="FunFam" id="1.25.40.250:FF:000001">
    <property type="entry name" value="Eukaryotic translation initiation factor 3 subunit K"/>
    <property type="match status" value="1"/>
</dbReference>
<dbReference type="Gene3D" id="1.25.40.250">
    <property type="entry name" value="ARM repeat, domain 1"/>
    <property type="match status" value="1"/>
</dbReference>
<dbReference type="Gene3D" id="1.10.10.10">
    <property type="entry name" value="Winged helix-like DNA-binding domain superfamily/Winged helix DNA-binding domain"/>
    <property type="match status" value="1"/>
</dbReference>
<dbReference type="HAMAP" id="MF_03010">
    <property type="entry name" value="eIF3k"/>
    <property type="match status" value="1"/>
</dbReference>
<dbReference type="InterPro" id="IPR016024">
    <property type="entry name" value="ARM-type_fold"/>
</dbReference>
<dbReference type="InterPro" id="IPR033464">
    <property type="entry name" value="CSN8_PSD8_EIF3K"/>
</dbReference>
<dbReference type="InterPro" id="IPR009374">
    <property type="entry name" value="eIF3k"/>
</dbReference>
<dbReference type="InterPro" id="IPR000717">
    <property type="entry name" value="PCI_dom"/>
</dbReference>
<dbReference type="InterPro" id="IPR016020">
    <property type="entry name" value="Transl_init_fac_sub12_N_euk"/>
</dbReference>
<dbReference type="InterPro" id="IPR036388">
    <property type="entry name" value="WH-like_DNA-bd_sf"/>
</dbReference>
<dbReference type="InterPro" id="IPR036390">
    <property type="entry name" value="WH_DNA-bd_sf"/>
</dbReference>
<dbReference type="PANTHER" id="PTHR13022">
    <property type="entry name" value="EUKARYOTIC TRANSLATION INITIATION FACTOR 3 SUBUNIT 11"/>
    <property type="match status" value="1"/>
</dbReference>
<dbReference type="PANTHER" id="PTHR13022:SF0">
    <property type="entry name" value="EUKARYOTIC TRANSLATION INITIATION FACTOR 3 SUBUNIT K"/>
    <property type="match status" value="1"/>
</dbReference>
<dbReference type="Pfam" id="PF10075">
    <property type="entry name" value="CSN8_PSD8_EIF3K"/>
    <property type="match status" value="1"/>
</dbReference>
<dbReference type="SUPFAM" id="SSF48371">
    <property type="entry name" value="ARM repeat"/>
    <property type="match status" value="1"/>
</dbReference>
<dbReference type="SUPFAM" id="SSF46785">
    <property type="entry name" value="Winged helix' DNA-binding domain"/>
    <property type="match status" value="1"/>
</dbReference>
<dbReference type="PROSITE" id="PS50250">
    <property type="entry name" value="PCI"/>
    <property type="match status" value="1"/>
</dbReference>
<name>EIF3K_XENLA</name>
<gene>
    <name type="primary">eif3k</name>
    <name type="synonym">eif3s12</name>
</gene>
<protein>
    <recommendedName>
        <fullName evidence="1">Eukaryotic translation initiation factor 3 subunit K</fullName>
        <shortName evidence="1">eIF3k</shortName>
    </recommendedName>
    <alternativeName>
        <fullName evidence="1">Eukaryotic translation initiation factor 3 subunit 12</fullName>
    </alternativeName>
    <alternativeName>
        <fullName evidence="1">eIF-3 p25</fullName>
    </alternativeName>
</protein>
<organism>
    <name type="scientific">Xenopus laevis</name>
    <name type="common">African clawed frog</name>
    <dbReference type="NCBI Taxonomy" id="8355"/>
    <lineage>
        <taxon>Eukaryota</taxon>
        <taxon>Metazoa</taxon>
        <taxon>Chordata</taxon>
        <taxon>Craniata</taxon>
        <taxon>Vertebrata</taxon>
        <taxon>Euteleostomi</taxon>
        <taxon>Amphibia</taxon>
        <taxon>Batrachia</taxon>
        <taxon>Anura</taxon>
        <taxon>Pipoidea</taxon>
        <taxon>Pipidae</taxon>
        <taxon>Xenopodinae</taxon>
        <taxon>Xenopus</taxon>
        <taxon>Xenopus</taxon>
    </lineage>
</organism>
<accession>Q6GNI4</accession>